<proteinExistence type="evidence at protein level"/>
<sequence>MAKGEGAESGSAAGLLPTSILQASERPVQVKKEPKKKQQLSICNKLCYAVGGAPYQLTGCALGFFLQIYLLDVAKVEPLPASIILFVGRAWDAFTDPLVGFCISKSSWTRLGRLMPWIIFSTPLAIIAYFLIWFVPDFPSGTESSHGFLWYLLFYCLFETLVTCFHVPYSALTMFISTEQSERDSATAYRMTVEVLGTVIGTAIQGQIVGQAKAPCLQDQNGSVVVSEVANRTQSTASLKDTQNAYLLAAGIIASIYVLCAFILILGVREQRELYESQQAESMPFFQGLRLVMGHGPYVKLIAGFLFTSLAFMLVEGNFALFCTYTLDFRNEFQNLLLAIMLSATFTIPIWQWFLTRFGKKTAVYIGISSAVPFLILVALMERNLIVTYVVAVAAGVSVAAAFLLPWSMLPDVIDDFHLKHPHSPGTEPIFFSFYVFFTKFASGVSLGVSTLSLDFANYQRQGCSQPEQVKFTLKMLVTMAPIILILLGLLLFKLYPIDEEKRRQNKKALQALREEASSSGCSDTDSTELASIL</sequence>
<dbReference type="EMBL" id="AK006096">
    <property type="protein sequence ID" value="BAB24407.1"/>
    <property type="molecule type" value="mRNA"/>
</dbReference>
<dbReference type="EMBL" id="BC046793">
    <property type="protein sequence ID" value="AAH46793.1"/>
    <property type="molecule type" value="mRNA"/>
</dbReference>
<dbReference type="EMBL" id="BC060526">
    <property type="protein sequence ID" value="AAH60526.1"/>
    <property type="molecule type" value="mRNA"/>
</dbReference>
<dbReference type="CCDS" id="CCDS18605.1"/>
<dbReference type="RefSeq" id="NP_083938.2">
    <property type="nucleotide sequence ID" value="NM_029662.2"/>
</dbReference>
<dbReference type="PDB" id="7N98">
    <property type="method" value="EM"/>
    <property type="resolution" value="3.50 A"/>
    <property type="chains" value="A=1-534"/>
</dbReference>
<dbReference type="PDBsum" id="7N98"/>
<dbReference type="EMDB" id="EMD-24252"/>
<dbReference type="SMR" id="Q9DA75"/>
<dbReference type="FunCoup" id="Q9DA75">
    <property type="interactions" value="207"/>
</dbReference>
<dbReference type="STRING" id="10090.ENSMUSP00000030408"/>
<dbReference type="SwissLipids" id="SLP:000000999"/>
<dbReference type="GlyCosmos" id="Q9DA75">
    <property type="glycosylation" value="2 sites, No reported glycans"/>
</dbReference>
<dbReference type="GlyGen" id="Q9DA75">
    <property type="glycosylation" value="2 sites, 1 N-linked glycan (1 site)"/>
</dbReference>
<dbReference type="PhosphoSitePlus" id="Q9DA75"/>
<dbReference type="SwissPalm" id="Q9DA75"/>
<dbReference type="PaxDb" id="10090-ENSMUSP00000030408"/>
<dbReference type="ProteomicsDB" id="293687"/>
<dbReference type="Antibodypedia" id="31983">
    <property type="antibodies" value="102 antibodies from 22 providers"/>
</dbReference>
<dbReference type="DNASU" id="76574"/>
<dbReference type="Ensembl" id="ENSMUST00000030408.12">
    <property type="protein sequence ID" value="ENSMUSP00000030408.6"/>
    <property type="gene ID" value="ENSMUSG00000028655.12"/>
</dbReference>
<dbReference type="GeneID" id="76574"/>
<dbReference type="KEGG" id="mmu:76574"/>
<dbReference type="UCSC" id="uc008uoo.2">
    <property type="organism name" value="mouse"/>
</dbReference>
<dbReference type="AGR" id="MGI:1923824"/>
<dbReference type="CTD" id="84879"/>
<dbReference type="MGI" id="MGI:1923824">
    <property type="gene designation" value="Mfsd2a"/>
</dbReference>
<dbReference type="VEuPathDB" id="HostDB:ENSMUSG00000028655"/>
<dbReference type="eggNOG" id="KOG4830">
    <property type="taxonomic scope" value="Eukaryota"/>
</dbReference>
<dbReference type="GeneTree" id="ENSGT00390000005318"/>
<dbReference type="HOGENOM" id="CLU_027408_6_1_1"/>
<dbReference type="InParanoid" id="Q9DA75"/>
<dbReference type="OMA" id="AFAIGFN"/>
<dbReference type="OrthoDB" id="197206at2759"/>
<dbReference type="PhylomeDB" id="Q9DA75"/>
<dbReference type="TreeFam" id="TF331194"/>
<dbReference type="Reactome" id="R-MMU-1483191">
    <property type="pathway name" value="Synthesis of PC"/>
</dbReference>
<dbReference type="BioGRID-ORCS" id="76574">
    <property type="hits" value="1 hit in 79 CRISPR screens"/>
</dbReference>
<dbReference type="ChiTaRS" id="Mfsd2a">
    <property type="organism name" value="mouse"/>
</dbReference>
<dbReference type="PRO" id="PR:Q9DA75"/>
<dbReference type="Proteomes" id="UP000000589">
    <property type="component" value="Chromosome 4"/>
</dbReference>
<dbReference type="RNAct" id="Q9DA75">
    <property type="molecule type" value="protein"/>
</dbReference>
<dbReference type="Bgee" id="ENSMUSG00000028655">
    <property type="expression patterns" value="Expressed in primary oocyte and 154 other cell types or tissues"/>
</dbReference>
<dbReference type="ExpressionAtlas" id="Q9DA75">
    <property type="expression patterns" value="baseline and differential"/>
</dbReference>
<dbReference type="GO" id="GO:0036464">
    <property type="term" value="C:cytoplasmic ribonucleoprotein granule"/>
    <property type="evidence" value="ECO:0007669"/>
    <property type="project" value="Ensembl"/>
</dbReference>
<dbReference type="GO" id="GO:0005829">
    <property type="term" value="C:cytosol"/>
    <property type="evidence" value="ECO:0007669"/>
    <property type="project" value="Ensembl"/>
</dbReference>
<dbReference type="GO" id="GO:0005789">
    <property type="term" value="C:endoplasmic reticulum membrane"/>
    <property type="evidence" value="ECO:0007669"/>
    <property type="project" value="UniProtKB-SubCell"/>
</dbReference>
<dbReference type="GO" id="GO:0005886">
    <property type="term" value="C:plasma membrane"/>
    <property type="evidence" value="ECO:0000314"/>
    <property type="project" value="ARUK-UCL"/>
</dbReference>
<dbReference type="GO" id="GO:0015245">
    <property type="term" value="F:fatty acid transmembrane transporter activity"/>
    <property type="evidence" value="ECO:0000314"/>
    <property type="project" value="BHF-UCL"/>
</dbReference>
<dbReference type="GO" id="GO:0005324">
    <property type="term" value="F:long-chain fatty acid transmembrane transporter activity"/>
    <property type="evidence" value="ECO:0000315"/>
    <property type="project" value="ARUK-UCL"/>
</dbReference>
<dbReference type="GO" id="GO:0140348">
    <property type="term" value="F:lysophosphatidylcholine flippase activity"/>
    <property type="evidence" value="ECO:0000314"/>
    <property type="project" value="GO_Central"/>
</dbReference>
<dbReference type="GO" id="GO:0051978">
    <property type="term" value="F:lysophospholipid:sodium symporter activity"/>
    <property type="evidence" value="ECO:0000314"/>
    <property type="project" value="UniProtKB"/>
</dbReference>
<dbReference type="GO" id="GO:1901480">
    <property type="term" value="F:oleate transmembrane transporter activity"/>
    <property type="evidence" value="ECO:0007669"/>
    <property type="project" value="Ensembl"/>
</dbReference>
<dbReference type="GO" id="GO:0015293">
    <property type="term" value="F:symporter activity"/>
    <property type="evidence" value="ECO:0000315"/>
    <property type="project" value="UniProtKB"/>
</dbReference>
<dbReference type="GO" id="GO:0007420">
    <property type="term" value="P:brain development"/>
    <property type="evidence" value="ECO:0000315"/>
    <property type="project" value="ARUK-UCL"/>
</dbReference>
<dbReference type="GO" id="GO:0008643">
    <property type="term" value="P:carbohydrate transport"/>
    <property type="evidence" value="ECO:0007669"/>
    <property type="project" value="InterPro"/>
</dbReference>
<dbReference type="GO" id="GO:0009267">
    <property type="term" value="P:cellular response to starvation"/>
    <property type="evidence" value="ECO:0000315"/>
    <property type="project" value="ARUK-UCL"/>
</dbReference>
<dbReference type="GO" id="GO:0050890">
    <property type="term" value="P:cognition"/>
    <property type="evidence" value="ECO:0007669"/>
    <property type="project" value="Ensembl"/>
</dbReference>
<dbReference type="GO" id="GO:0097009">
    <property type="term" value="P:energy homeostasis"/>
    <property type="evidence" value="ECO:0000315"/>
    <property type="project" value="ARUK-UCL"/>
</dbReference>
<dbReference type="GO" id="GO:0060856">
    <property type="term" value="P:establishment of blood-brain barrier"/>
    <property type="evidence" value="ECO:0000315"/>
    <property type="project" value="UniProtKB"/>
</dbReference>
<dbReference type="GO" id="GO:0015908">
    <property type="term" value="P:fatty acid transport"/>
    <property type="evidence" value="ECO:0000315"/>
    <property type="project" value="UniProtKB"/>
</dbReference>
<dbReference type="GO" id="GO:0021766">
    <property type="term" value="P:hippocampus development"/>
    <property type="evidence" value="ECO:0000314"/>
    <property type="project" value="BHF-UCL"/>
</dbReference>
<dbReference type="GO" id="GO:1990379">
    <property type="term" value="P:lipid transport across blood-brain barrier"/>
    <property type="evidence" value="ECO:0000315"/>
    <property type="project" value="UniProtKB"/>
</dbReference>
<dbReference type="GO" id="GO:0015909">
    <property type="term" value="P:long-chain fatty acid transport"/>
    <property type="evidence" value="ECO:0000315"/>
    <property type="project" value="ARUK-UCL"/>
</dbReference>
<dbReference type="GO" id="GO:0140329">
    <property type="term" value="P:lysophospholipid translocation"/>
    <property type="evidence" value="ECO:0007669"/>
    <property type="project" value="Ensembl"/>
</dbReference>
<dbReference type="GO" id="GO:0051977">
    <property type="term" value="P:lysophospholipid transport"/>
    <property type="evidence" value="ECO:0000314"/>
    <property type="project" value="UniProtKB"/>
</dbReference>
<dbReference type="GO" id="GO:0035633">
    <property type="term" value="P:maintenance of blood-brain barrier"/>
    <property type="evidence" value="ECO:0000315"/>
    <property type="project" value="ARUK-UCL"/>
</dbReference>
<dbReference type="GO" id="GO:0061744">
    <property type="term" value="P:motor behavior"/>
    <property type="evidence" value="ECO:0000315"/>
    <property type="project" value="ARUK-UCL"/>
</dbReference>
<dbReference type="GO" id="GO:0031999">
    <property type="term" value="P:negative regulation of fatty acid beta-oxidation"/>
    <property type="evidence" value="ECO:0000315"/>
    <property type="project" value="ARUK-UCL"/>
</dbReference>
<dbReference type="GO" id="GO:0008594">
    <property type="term" value="P:photoreceptor cell morphogenesis"/>
    <property type="evidence" value="ECO:0000315"/>
    <property type="project" value="ARUK-UCL"/>
</dbReference>
<dbReference type="GO" id="GO:0035845">
    <property type="term" value="P:photoreceptor cell outer segment organization"/>
    <property type="evidence" value="ECO:0000315"/>
    <property type="project" value="ARUK-UCL"/>
</dbReference>
<dbReference type="GO" id="GO:0030307">
    <property type="term" value="P:positive regulation of cell growth"/>
    <property type="evidence" value="ECO:0000315"/>
    <property type="project" value="ARUK-UCL"/>
</dbReference>
<dbReference type="GO" id="GO:0010867">
    <property type="term" value="P:positive regulation of triglyceride biosynthetic process"/>
    <property type="evidence" value="ECO:0000315"/>
    <property type="project" value="ARUK-UCL"/>
</dbReference>
<dbReference type="GO" id="GO:0050773">
    <property type="term" value="P:regulation of dendrite development"/>
    <property type="evidence" value="ECO:0000315"/>
    <property type="project" value="ARUK-UCL"/>
</dbReference>
<dbReference type="GO" id="GO:0040014">
    <property type="term" value="P:regulation of multicellular organism growth"/>
    <property type="evidence" value="ECO:0000315"/>
    <property type="project" value="ARUK-UCL"/>
</dbReference>
<dbReference type="GO" id="GO:0150011">
    <property type="term" value="P:regulation of neuron projection arborization"/>
    <property type="evidence" value="ECO:0000315"/>
    <property type="project" value="ARUK-UCL"/>
</dbReference>
<dbReference type="GO" id="GO:0150172">
    <property type="term" value="P:regulation of phosphatidylcholine metabolic process"/>
    <property type="evidence" value="ECO:0000315"/>
    <property type="project" value="ARUK-UCL"/>
</dbReference>
<dbReference type="GO" id="GO:0150175">
    <property type="term" value="P:regulation of phosphatidylethanolamine metabolic process"/>
    <property type="evidence" value="ECO:0000315"/>
    <property type="project" value="ARUK-UCL"/>
</dbReference>
<dbReference type="GO" id="GO:0150178">
    <property type="term" value="P:regulation of phosphatidylserine metabolic process"/>
    <property type="evidence" value="ECO:0000315"/>
    <property type="project" value="ARUK-UCL"/>
</dbReference>
<dbReference type="GO" id="GO:0060042">
    <property type="term" value="P:retina morphogenesis in camera-type eye"/>
    <property type="evidence" value="ECO:0000315"/>
    <property type="project" value="ARUK-UCL"/>
</dbReference>
<dbReference type="GO" id="GO:0003406">
    <property type="term" value="P:retinal pigment epithelium development"/>
    <property type="evidence" value="ECO:0000315"/>
    <property type="project" value="ARUK-UCL"/>
</dbReference>
<dbReference type="GO" id="GO:0045056">
    <property type="term" value="P:transcytosis"/>
    <property type="evidence" value="ECO:0000315"/>
    <property type="project" value="UniProtKB"/>
</dbReference>
<dbReference type="GO" id="GO:0034379">
    <property type="term" value="P:very-low-density lipoprotein particle assembly"/>
    <property type="evidence" value="ECO:0000315"/>
    <property type="project" value="ARUK-UCL"/>
</dbReference>
<dbReference type="FunFam" id="1.20.1250.20:FF:000185">
    <property type="entry name" value="sodium-dependent lysophosphatidylcholine symporter 1 isoform X1"/>
    <property type="match status" value="1"/>
</dbReference>
<dbReference type="FunFam" id="1.20.1250.20:FF:000351">
    <property type="entry name" value="sodium-dependent lysophosphatidylcholine symporter 1 isoform X4"/>
    <property type="match status" value="1"/>
</dbReference>
<dbReference type="Gene3D" id="1.20.1250.20">
    <property type="entry name" value="MFS general substrate transporter like domains"/>
    <property type="match status" value="2"/>
</dbReference>
<dbReference type="InterPro" id="IPR039672">
    <property type="entry name" value="MFS_2"/>
</dbReference>
<dbReference type="InterPro" id="IPR036259">
    <property type="entry name" value="MFS_trans_sf"/>
</dbReference>
<dbReference type="PANTHER" id="PTHR11328">
    <property type="entry name" value="MAJOR FACILITATOR SUPERFAMILY DOMAIN-CONTAINING PROTEIN"/>
    <property type="match status" value="1"/>
</dbReference>
<dbReference type="PANTHER" id="PTHR11328:SF29">
    <property type="entry name" value="SODIUM-DEPENDENT LYSOPHOSPHATIDYLCHOLINE SYMPORTER 1"/>
    <property type="match status" value="1"/>
</dbReference>
<dbReference type="Pfam" id="PF13347">
    <property type="entry name" value="MFS_2"/>
    <property type="match status" value="1"/>
</dbReference>
<dbReference type="SUPFAM" id="SSF103473">
    <property type="entry name" value="MFS general substrate transporter"/>
    <property type="match status" value="1"/>
</dbReference>
<feature type="chain" id="PRO_0000273388" description="Sodium-dependent lysophosphatidylcholine symporter 1">
    <location>
        <begin position="1"/>
        <end position="534"/>
    </location>
</feature>
<feature type="topological domain" description="Cytoplasmic" evidence="7 11">
    <location>
        <begin position="1"/>
        <end position="39"/>
    </location>
</feature>
<feature type="transmembrane region" description="Helical" evidence="7 11">
    <location>
        <begin position="40"/>
        <end position="69"/>
    </location>
</feature>
<feature type="topological domain" description="Extracellular" evidence="7 11">
    <location>
        <begin position="70"/>
        <end position="80"/>
    </location>
</feature>
<feature type="transmembrane region" description="Helical" evidence="7 11">
    <location>
        <begin position="81"/>
        <end position="101"/>
    </location>
</feature>
<feature type="topological domain" description="Cytoplasmic" evidence="7 11">
    <location>
        <begin position="102"/>
        <end position="113"/>
    </location>
</feature>
<feature type="transmembrane region" description="Helical" evidence="7 11">
    <location>
        <begin position="114"/>
        <end position="133"/>
    </location>
</feature>
<feature type="topological domain" description="Extracellular" evidence="7 11">
    <location>
        <begin position="134"/>
        <end position="148"/>
    </location>
</feature>
<feature type="transmembrane region" description="Helical" evidence="7 11">
    <location>
        <begin position="149"/>
        <end position="173"/>
    </location>
</feature>
<feature type="topological domain" description="Cytoplasmic" evidence="7 11">
    <location>
        <begin position="174"/>
        <end position="180"/>
    </location>
</feature>
<feature type="transmembrane region" description="Helical" evidence="7 11">
    <location>
        <begin position="181"/>
        <end position="212"/>
    </location>
</feature>
<feature type="topological domain" description="Extracellular" evidence="7 11">
    <location>
        <begin position="213"/>
        <end position="232"/>
    </location>
</feature>
<feature type="transmembrane region" description="Helical" evidence="7 11">
    <location>
        <begin position="233"/>
        <end position="266"/>
    </location>
</feature>
<feature type="topological domain" description="Cytoplasmic" evidence="7 11">
    <location>
        <begin position="267"/>
        <end position="297"/>
    </location>
</feature>
<feature type="transmembrane region" description="Helical" evidence="7 11">
    <location>
        <begin position="298"/>
        <end position="324"/>
    </location>
</feature>
<feature type="topological domain" description="Extracellular" evidence="7 11">
    <location>
        <begin position="325"/>
        <end position="335"/>
    </location>
</feature>
<feature type="transmembrane region" description="Helical" evidence="7 11">
    <location>
        <begin position="336"/>
        <end position="354"/>
    </location>
</feature>
<feature type="topological domain" description="Cytoplasmic" evidence="7 11">
    <location>
        <begin position="355"/>
        <end position="358"/>
    </location>
</feature>
<feature type="transmembrane region" description="Helical" evidence="7 11">
    <location>
        <begin position="359"/>
        <end position="380"/>
    </location>
</feature>
<feature type="topological domain" description="Extracellular" evidence="7 11">
    <location>
        <begin position="381"/>
        <end position="383"/>
    </location>
</feature>
<feature type="transmembrane region" description="Helical" evidence="7 11">
    <location>
        <begin position="384"/>
        <end position="420"/>
    </location>
</feature>
<feature type="topological domain" description="Cytoplasmic" evidence="7 11">
    <location>
        <begin position="421"/>
        <end position="430"/>
    </location>
</feature>
<feature type="transmembrane region" description="Helical" evidence="7 11">
    <location>
        <begin position="431"/>
        <end position="457"/>
    </location>
</feature>
<feature type="topological domain" description="Extracellular" evidence="7 11">
    <location>
        <begin position="458"/>
        <end position="469"/>
    </location>
</feature>
<feature type="transmembrane region" description="Helical" evidence="7 11">
    <location>
        <begin position="470"/>
        <end position="493"/>
    </location>
</feature>
<feature type="topological domain" description="Cytoplasmic" evidence="7 11">
    <location>
        <begin position="494"/>
        <end position="534"/>
    </location>
</feature>
<feature type="glycosylation site" description="N-linked (GlcNAc...) asparagine" evidence="1">
    <location>
        <position position="221"/>
    </location>
</feature>
<feature type="glycosylation site" description="N-linked (GlcNAc...) asparagine" evidence="1">
    <location>
        <position position="231"/>
    </location>
</feature>
<feature type="disulfide bond" evidence="7 11">
    <location>
        <begin position="216"/>
        <end position="464"/>
    </location>
</feature>
<feature type="mutagenesis site" description="Significant reduction in LPC transport." evidence="7">
    <original>Y</original>
    <variation>A</variation>
    <location>
        <position position="55"/>
    </location>
</feature>
<feature type="mutagenesis site" description="Slightly reduced LPC transport." evidence="7">
    <original>Q</original>
    <variation>A</variation>
    <location>
        <position position="56"/>
    </location>
</feature>
<feature type="mutagenesis site" description="Slightly increased LPC transport." evidence="7">
    <original>F</original>
    <variation>A</variation>
    <location>
        <position position="64"/>
    </location>
</feature>
<feature type="mutagenesis site" description="Abolishes LPC transport." evidence="7">
    <original>Q</original>
    <variation>H</variation>
    <location>
        <position position="67"/>
    </location>
</feature>
<feature type="mutagenesis site" description="No effect on LPC transport." evidence="7">
    <original>S</original>
    <variation>A</variation>
    <location>
        <position position="82"/>
    </location>
</feature>
<feature type="mutagenesis site" description="Slightly reduced LPC transport." evidence="7">
    <original>F</original>
    <variation>A</variation>
    <location>
        <position position="86"/>
    </location>
</feature>
<feature type="mutagenesis site" description="No effect on LPC transport." evidence="7">
    <original>R</original>
    <variation>A</variation>
    <location>
        <position position="89"/>
    </location>
</feature>
<feature type="mutagenesis site" description="Significant reduction in LPC transport. Abolishes LPC transport; when associated with A-96." evidence="5 7">
    <original>D</original>
    <variation>A</variation>
    <location>
        <position position="92"/>
    </location>
</feature>
<feature type="mutagenesis site" description="Significant reduction in LPC transport." evidence="7">
    <original>T</original>
    <variation>A</variation>
    <location>
        <position position="95"/>
    </location>
</feature>
<feature type="mutagenesis site" description="Abolishes LPC transport. Abolishes LPC transport; when associated with A-92." evidence="5 7">
    <original>D</original>
    <variation>A</variation>
    <location>
        <position position="96"/>
    </location>
</feature>
<feature type="mutagenesis site" description="Slightly reduced LPC transport." evidence="7">
    <original>E</original>
    <variation>A</variation>
    <location>
        <position position="159"/>
    </location>
</feature>
<feature type="mutagenesis site" description="Slightly reduced LPC transport." evidence="7">
    <original>T</original>
    <variation>A</variation>
    <location>
        <position position="163"/>
    </location>
</feature>
<feature type="mutagenesis site" description="Abolishes LPC transport." evidence="7">
    <original>T</original>
    <variation>M</variation>
    <location>
        <position position="163"/>
    </location>
</feature>
<feature type="mutagenesis site" description="Abolishes LPC transport." evidence="7">
    <original>H</original>
    <variation>A</variation>
    <location>
        <position position="166"/>
    </location>
</feature>
<feature type="mutagenesis site" description="Significant reduction in LPC transport." evidence="7">
    <original>P</original>
    <variation>T</variation>
    <location>
        <position position="168"/>
    </location>
</feature>
<feature type="mutagenesis site" description="Significant reduction in LPC transport." evidence="7">
    <original>S</original>
    <variation>L</variation>
    <location>
        <position position="170"/>
    </location>
</feature>
<feature type="mutagenesis site" description="Abolishes LPC transport." evidence="7">
    <original>R</original>
    <variation>A</variation>
    <location>
        <position position="190"/>
    </location>
</feature>
<feature type="mutagenesis site" description="Significant reduction in LPC transport." evidence="7">
    <original>E</original>
    <variation>A</variation>
    <location>
        <position position="194"/>
    </location>
</feature>
<feature type="mutagenesis site" description="Slightly increased LPC transport." evidence="7">
    <original>T</original>
    <variation>A</variation>
    <location>
        <position position="202"/>
    </location>
</feature>
<feature type="mutagenesis site" description="Significant reduction in LPC transport." evidence="7">
    <original>T</original>
    <variation>F</variation>
    <location>
        <position position="202"/>
    </location>
</feature>
<feature type="mutagenesis site" description="Significant reduction in LPC transport." evidence="7">
    <original>T</original>
    <variation>M</variation>
    <location>
        <position position="202"/>
    </location>
</feature>
<feature type="mutagenesis site" description="Slightly reduced LPC transport." evidence="7">
    <original>Q</original>
    <variation>A</variation>
    <location>
        <position position="207"/>
    </location>
</feature>
<feature type="mutagenesis site" description="Significant reduction in LPC transport." evidence="7">
    <original>C</original>
    <variation>A</variation>
    <location>
        <position position="216"/>
    </location>
</feature>
<feature type="mutagenesis site" description="Abolishes LPC transport." evidence="7">
    <original>A</original>
    <variation>F</variation>
    <location>
        <position position="254"/>
    </location>
</feature>
<feature type="mutagenesis site" description="Significant reduction in LPC transport." evidence="7">
    <original>F</original>
    <variation>A</variation>
    <location>
        <position position="305"/>
    </location>
</feature>
<feature type="mutagenesis site" description="Significant reduction in LPC transport." evidence="7">
    <original>S</original>
    <variation>A</variation>
    <location>
        <position position="309"/>
    </location>
</feature>
<feature type="mutagenesis site" description="No effect on LPC transport." evidence="7">
    <original>R</original>
    <variation>H</variation>
    <location>
        <position position="330"/>
    </location>
</feature>
<feature type="mutagenesis site" description="Slightly reduced LPC transport." evidence="7">
    <original>Q</original>
    <variation>A</variation>
    <location>
        <position position="334"/>
    </location>
</feature>
<feature type="mutagenesis site" description="Significant reduction in LPC transport." evidence="7">
    <original>N</original>
    <variation>A</variation>
    <location>
        <position position="335"/>
    </location>
</feature>
<feature type="mutagenesis site" description="Significant reduction in LPC transport." evidence="7">
    <original>S</original>
    <variation>L</variation>
    <location>
        <position position="343"/>
    </location>
</feature>
<feature type="mutagenesis site" description="Significant reduction in LPC transport." evidence="7">
    <original>F</original>
    <variation>A</variation>
    <location>
        <position position="403"/>
    </location>
</feature>
<feature type="mutagenesis site" description="Significant reduction in LPC transport." evidence="7">
    <original>P</original>
    <variation>H</variation>
    <location>
        <position position="406"/>
    </location>
</feature>
<feature type="mutagenesis site" description="Significant reduction in LPC transport." evidence="7">
    <original>W</original>
    <variation>A</variation>
    <location>
        <position position="407"/>
    </location>
</feature>
<feature type="mutagenesis site" description="No effect on LPC transport." evidence="7">
    <original>T</original>
    <variation>A</variation>
    <location>
        <position position="439"/>
    </location>
</feature>
<feature type="mutagenesis site" description="Abolishes LPC transport." evidence="7">
    <original>K</original>
    <variation>A</variation>
    <location>
        <position position="440"/>
    </location>
</feature>
<feature type="mutagenesis site" description="Slightly reduced LPC transport." evidence="7">
    <original>T</original>
    <variation>A</variation>
    <location>
        <position position="451"/>
    </location>
</feature>
<feature type="mutagenesis site" description="Slightly reduced LPC transport." evidence="7">
    <original>D</original>
    <variation>A</variation>
    <location>
        <position position="455"/>
    </location>
</feature>
<feature type="mutagenesis site" description="Slightly reduced LPC transport." evidence="7">
    <original>R</original>
    <variation>A</variation>
    <location>
        <position position="461"/>
    </location>
</feature>
<feature type="mutagenesis site" description="Significant reduction in LPC transport." evidence="7">
    <original>C</original>
    <variation>A</variation>
    <location>
        <position position="464"/>
    </location>
</feature>
<feature type="mutagenesis site" description="Abolishes LPC transport." evidence="7">
    <original>P</original>
    <variation>L</variation>
    <location>
        <position position="497"/>
    </location>
</feature>
<feature type="sequence conflict" description="In Ref. 2; AAH46793." evidence="9" ref="2">
    <original>Q</original>
    <variation>H</variation>
    <location>
        <position position="67"/>
    </location>
</feature>
<feature type="helix" evidence="12">
    <location>
        <begin position="42"/>
        <end position="50"/>
    </location>
</feature>
<feature type="helix" evidence="12">
    <location>
        <begin position="53"/>
        <end position="63"/>
    </location>
</feature>
<feature type="turn" evidence="12">
    <location>
        <begin position="64"/>
        <end position="68"/>
    </location>
</feature>
<feature type="helix" evidence="12">
    <location>
        <begin position="69"/>
        <end position="72"/>
    </location>
</feature>
<feature type="helix" evidence="12">
    <location>
        <begin position="78"/>
        <end position="104"/>
    </location>
</feature>
<feature type="helix" evidence="12">
    <location>
        <begin position="116"/>
        <end position="119"/>
    </location>
</feature>
<feature type="helix" evidence="12">
    <location>
        <begin position="122"/>
        <end position="132"/>
    </location>
</feature>
<feature type="helix" evidence="12">
    <location>
        <begin position="144"/>
        <end position="147"/>
    </location>
</feature>
<feature type="helix" evidence="12">
    <location>
        <begin position="149"/>
        <end position="171"/>
    </location>
</feature>
<feature type="helix" evidence="12">
    <location>
        <begin position="172"/>
        <end position="174"/>
    </location>
</feature>
<feature type="helix" evidence="12">
    <location>
        <begin position="180"/>
        <end position="208"/>
    </location>
</feature>
<feature type="strand" evidence="12">
    <location>
        <begin position="215"/>
        <end position="218"/>
    </location>
</feature>
<feature type="strand" evidence="12">
    <location>
        <begin position="220"/>
        <end position="222"/>
    </location>
</feature>
<feature type="strand" evidence="12">
    <location>
        <begin position="224"/>
        <end position="226"/>
    </location>
</feature>
<feature type="helix" evidence="12">
    <location>
        <begin position="236"/>
        <end position="265"/>
    </location>
</feature>
<feature type="turn" evidence="12">
    <location>
        <begin position="285"/>
        <end position="288"/>
    </location>
</feature>
<feature type="helix" evidence="12">
    <location>
        <begin position="289"/>
        <end position="292"/>
    </location>
</feature>
<feature type="helix" evidence="12">
    <location>
        <begin position="297"/>
        <end position="322"/>
    </location>
</feature>
<feature type="strand" evidence="12">
    <location>
        <begin position="325"/>
        <end position="328"/>
    </location>
</feature>
<feature type="turn" evidence="12">
    <location>
        <begin position="330"/>
        <end position="332"/>
    </location>
</feature>
<feature type="helix" evidence="12">
    <location>
        <begin position="333"/>
        <end position="343"/>
    </location>
</feature>
<feature type="turn" evidence="12">
    <location>
        <begin position="344"/>
        <end position="347"/>
    </location>
</feature>
<feature type="helix" evidence="12">
    <location>
        <begin position="348"/>
        <end position="356"/>
    </location>
</feature>
<feature type="strand" evidence="12">
    <location>
        <begin position="360"/>
        <end position="363"/>
    </location>
</feature>
<feature type="helix" evidence="12">
    <location>
        <begin position="364"/>
        <end position="378"/>
    </location>
</feature>
<feature type="helix" evidence="12">
    <location>
        <begin position="387"/>
        <end position="408"/>
    </location>
</feature>
<feature type="helix" evidence="12">
    <location>
        <begin position="410"/>
        <end position="419"/>
    </location>
</feature>
<feature type="helix" evidence="12">
    <location>
        <begin position="428"/>
        <end position="455"/>
    </location>
</feature>
<feature type="turn" evidence="12">
    <location>
        <begin position="456"/>
        <end position="458"/>
    </location>
</feature>
<feature type="strand" evidence="12">
    <location>
        <begin position="461"/>
        <end position="464"/>
    </location>
</feature>
<feature type="helix" evidence="12">
    <location>
        <begin position="470"/>
        <end position="492"/>
    </location>
</feature>
<feature type="helix" evidence="12">
    <location>
        <begin position="499"/>
        <end position="508"/>
    </location>
</feature>
<comment type="function">
    <text evidence="2 3 4 5 7">Sodium-dependent lysophosphatidylcholine (LPC) symporter, which plays an essential role for blood-brain barrier formation and function (PubMed:18694395, PubMed:23209793, PubMed:24828040, PubMed:24828044, PubMed:34349262). Specifically expressed in endothelium of the blood-brain barrier of micro-vessels and transports LPC into the brain (PubMed:24828040, PubMed:24828044, PubMed:34349262). Transport of LPC is essential because it constitutes the major mechanism by which docosahexaenoic acid (DHA), an omega-3 fatty acid that is essential for normal brain growth and cognitive function, enters the brain (PubMed:24828040, PubMed:24828044, PubMed:34349262). Transports LPC carrying long-chain fatty acids such LPC oleate and LPC palmitate with a minimum acyl chain length of 14 carbons (PubMed:24828044, PubMed:34349262). Does not transport docosahexaenoic acid in unesterified fatty acid (PubMed:24828044). Not required for central nervous system vascular morphogenesis (PubMed:24828040).</text>
</comment>
<comment type="catalytic activity">
    <reaction evidence="4">
        <text>a 1-acyl-sn-glycero-3-phosphocholine(in) + Na(+)(in) = a 1-acyl-sn-glycero-3-phosphocholine(out) + Na(+)(out)</text>
        <dbReference type="Rhea" id="RHEA:44376"/>
        <dbReference type="ChEBI" id="CHEBI:29101"/>
        <dbReference type="ChEBI" id="CHEBI:58168"/>
    </reaction>
</comment>
<comment type="catalytic activity">
    <reaction evidence="4">
        <text>1-(4Z,7Z,10Z,13Z,16Z,19Z-docosahexaenoyl)-sn-glycero-3-phosphocholine(in) + Na(+)(in) = 1-(4Z,7Z,10Z,13Z,16Z,19Z-docosahexaenoyl)-sn-glycero-3-phosphocholine(out) + Na(+)(out)</text>
        <dbReference type="Rhea" id="RHEA:43860"/>
        <dbReference type="ChEBI" id="CHEBI:29101"/>
        <dbReference type="ChEBI" id="CHEBI:73873"/>
    </reaction>
</comment>
<comment type="catalytic activity">
    <reaction evidence="4">
        <text>1-(9Z-octadecenoyl)-sn-glycero-3-phosphocholine(in) + Na(+)(in) = 1-(9Z-octadecenoyl)-sn-glycero-3-phosphocholine(out) + Na(+)(out)</text>
        <dbReference type="Rhea" id="RHEA:43856"/>
        <dbReference type="ChEBI" id="CHEBI:28610"/>
        <dbReference type="ChEBI" id="CHEBI:29101"/>
    </reaction>
</comment>
<comment type="catalytic activity">
    <reaction evidence="4">
        <text>1-hexadecanoyl-sn-glycero-3-phosphocholine(in) + Na(+)(in) = 1-hexadecanoyl-sn-glycero-3-phosphocholine(out) + Na(+)(out)</text>
        <dbReference type="Rhea" id="RHEA:43864"/>
        <dbReference type="ChEBI" id="CHEBI:29101"/>
        <dbReference type="ChEBI" id="CHEBI:72998"/>
    </reaction>
</comment>
<comment type="catalytic activity">
    <reaction evidence="4">
        <text>a 1-acyl-sn-glycero-3-phosphoethanolamine(in) + Na(+)(in) = a 1-acyl-sn-glycero-3-phosphoethanolamine(out) + Na(+)(out)</text>
        <dbReference type="Rhea" id="RHEA:43868"/>
        <dbReference type="ChEBI" id="CHEBI:29101"/>
        <dbReference type="ChEBI" id="CHEBI:64381"/>
    </reaction>
</comment>
<comment type="subcellular location">
    <subcellularLocation>
        <location evidence="3 4">Cell membrane</location>
        <topology evidence="7">Multi-pass membrane protein</topology>
    </subcellularLocation>
    <subcellularLocation>
        <location evidence="2">Endoplasmic reticulum membrane</location>
        <topology evidence="7">Multi-pass membrane protein</topology>
    </subcellularLocation>
</comment>
<comment type="tissue specificity">
    <text evidence="2 3 4 5">Widely expressed. Exhibits an oscillatory pattern of expression in brown adipose tissue and liver consistent with a circadian rhythm. Enriched in brain micro-vessels, where it is specifically present in endothelium constituting the blood-brain barrier (at protein level) (PubMed:24828040, PubMed:24828044).</text>
</comment>
<comment type="induction">
    <text evidence="2 3">By fasting in liver and brown adipose tissue as well as by cold exposure in brown adipose tissue. Expression following fasting is dependent on glucagon signaling and Ppara.</text>
</comment>
<comment type="PTM">
    <text evidence="3">N-glycosylated.</text>
</comment>
<comment type="disruption phenotype">
    <text evidence="3 4 5 6">Mice are born at Mendelian ratios, but show increased postnatal mortality early in life (PubMed:24828044). Mice are smaller, leaner and have decreased serum, liver and brown adipose triglycerides (PubMed:23209793). After weaning, mice display motor dysfunction with front-paw clasping during tail suspension. Brain size and weight are also significantly lower. Behavioral tests indicate that mice have deficits in learning, and short- and long-term memory, as well as severe anxiety, a phenotype related to omega-3 fatty-acid deficiency. Lipidomic analysis of knockout mice shows strongly reduced levels of docosahexaenoic acid (DHA) in brain accompanied by neuronal cell loss in hippocampus and cerebellum (PubMed:24828044). Mice also show a leaky blood-brain barrier from embryonic stages through to adulthood, while the normal patterning of vascular networks is maintained. Electron microscopy analysis shows an increase in central nervous system-endothelial-cell vesicular transcytosis not associated with tight-junction defects (PubMed:24828040). Mice have an increase in plasma levels of LPC (PubMed:26005868).</text>
</comment>
<comment type="similarity">
    <text evidence="9">Belongs to the major facilitator superfamily.</text>
</comment>
<protein>
    <recommendedName>
        <fullName evidence="9">Sodium-dependent lysophosphatidylcholine symporter 1</fullName>
        <shortName>NLS1</shortName>
        <shortName>Sodium-dependent LPC symporter 1</shortName>
    </recommendedName>
    <alternativeName>
        <fullName>Major facilitator superfamily domain-containing protein 2A</fullName>
        <shortName evidence="8">Mfsd2a</shortName>
    </alternativeName>
</protein>
<name>NLS1_MOUSE</name>
<gene>
    <name evidence="10" type="primary">Mfsd2a</name>
    <name type="synonym">Mfsd2</name>
    <name type="synonym">Nls1</name>
</gene>
<accession>Q9DA75</accession>
<accession>Q80ZW8</accession>
<keyword id="KW-0002">3D-structure</keyword>
<keyword id="KW-1003">Cell membrane</keyword>
<keyword id="KW-1015">Disulfide bond</keyword>
<keyword id="KW-0256">Endoplasmic reticulum</keyword>
<keyword id="KW-0325">Glycoprotein</keyword>
<keyword id="KW-0445">Lipid transport</keyword>
<keyword id="KW-0472">Membrane</keyword>
<keyword id="KW-1185">Reference proteome</keyword>
<keyword id="KW-0769">Symport</keyword>
<keyword id="KW-0812">Transmembrane</keyword>
<keyword id="KW-1133">Transmembrane helix</keyword>
<keyword id="KW-0813">Transport</keyword>
<evidence type="ECO:0000255" key="1"/>
<evidence type="ECO:0000269" key="2">
    <source>
    </source>
</evidence>
<evidence type="ECO:0000269" key="3">
    <source>
    </source>
</evidence>
<evidence type="ECO:0000269" key="4">
    <source>
    </source>
</evidence>
<evidence type="ECO:0000269" key="5">
    <source>
    </source>
</evidence>
<evidence type="ECO:0000269" key="6">
    <source>
    </source>
</evidence>
<evidence type="ECO:0000269" key="7">
    <source>
    </source>
</evidence>
<evidence type="ECO:0000303" key="8">
    <source>
    </source>
</evidence>
<evidence type="ECO:0000305" key="9"/>
<evidence type="ECO:0000312" key="10">
    <source>
        <dbReference type="MGI" id="MGI:1923824"/>
    </source>
</evidence>
<evidence type="ECO:0007744" key="11">
    <source>
        <dbReference type="PDB" id="7N98"/>
    </source>
</evidence>
<evidence type="ECO:0007829" key="12">
    <source>
        <dbReference type="PDB" id="7N98"/>
    </source>
</evidence>
<organism>
    <name type="scientific">Mus musculus</name>
    <name type="common">Mouse</name>
    <dbReference type="NCBI Taxonomy" id="10090"/>
    <lineage>
        <taxon>Eukaryota</taxon>
        <taxon>Metazoa</taxon>
        <taxon>Chordata</taxon>
        <taxon>Craniata</taxon>
        <taxon>Vertebrata</taxon>
        <taxon>Euteleostomi</taxon>
        <taxon>Mammalia</taxon>
        <taxon>Eutheria</taxon>
        <taxon>Euarchontoglires</taxon>
        <taxon>Glires</taxon>
        <taxon>Rodentia</taxon>
        <taxon>Myomorpha</taxon>
        <taxon>Muroidea</taxon>
        <taxon>Muridae</taxon>
        <taxon>Murinae</taxon>
        <taxon>Mus</taxon>
        <taxon>Mus</taxon>
    </lineage>
</organism>
<reference key="1">
    <citation type="journal article" date="2005" name="Science">
        <title>The transcriptional landscape of the mammalian genome.</title>
        <authorList>
            <person name="Carninci P."/>
            <person name="Kasukawa T."/>
            <person name="Katayama S."/>
            <person name="Gough J."/>
            <person name="Frith M.C."/>
            <person name="Maeda N."/>
            <person name="Oyama R."/>
            <person name="Ravasi T."/>
            <person name="Lenhard B."/>
            <person name="Wells C."/>
            <person name="Kodzius R."/>
            <person name="Shimokawa K."/>
            <person name="Bajic V.B."/>
            <person name="Brenner S.E."/>
            <person name="Batalov S."/>
            <person name="Forrest A.R."/>
            <person name="Zavolan M."/>
            <person name="Davis M.J."/>
            <person name="Wilming L.G."/>
            <person name="Aidinis V."/>
            <person name="Allen J.E."/>
            <person name="Ambesi-Impiombato A."/>
            <person name="Apweiler R."/>
            <person name="Aturaliya R.N."/>
            <person name="Bailey T.L."/>
            <person name="Bansal M."/>
            <person name="Baxter L."/>
            <person name="Beisel K.W."/>
            <person name="Bersano T."/>
            <person name="Bono H."/>
            <person name="Chalk A.M."/>
            <person name="Chiu K.P."/>
            <person name="Choudhary V."/>
            <person name="Christoffels A."/>
            <person name="Clutterbuck D.R."/>
            <person name="Crowe M.L."/>
            <person name="Dalla E."/>
            <person name="Dalrymple B.P."/>
            <person name="de Bono B."/>
            <person name="Della Gatta G."/>
            <person name="di Bernardo D."/>
            <person name="Down T."/>
            <person name="Engstrom P."/>
            <person name="Fagiolini M."/>
            <person name="Faulkner G."/>
            <person name="Fletcher C.F."/>
            <person name="Fukushima T."/>
            <person name="Furuno M."/>
            <person name="Futaki S."/>
            <person name="Gariboldi M."/>
            <person name="Georgii-Hemming P."/>
            <person name="Gingeras T.R."/>
            <person name="Gojobori T."/>
            <person name="Green R.E."/>
            <person name="Gustincich S."/>
            <person name="Harbers M."/>
            <person name="Hayashi Y."/>
            <person name="Hensch T.K."/>
            <person name="Hirokawa N."/>
            <person name="Hill D."/>
            <person name="Huminiecki L."/>
            <person name="Iacono M."/>
            <person name="Ikeo K."/>
            <person name="Iwama A."/>
            <person name="Ishikawa T."/>
            <person name="Jakt M."/>
            <person name="Kanapin A."/>
            <person name="Katoh M."/>
            <person name="Kawasawa Y."/>
            <person name="Kelso J."/>
            <person name="Kitamura H."/>
            <person name="Kitano H."/>
            <person name="Kollias G."/>
            <person name="Krishnan S.P."/>
            <person name="Kruger A."/>
            <person name="Kummerfeld S.K."/>
            <person name="Kurochkin I.V."/>
            <person name="Lareau L.F."/>
            <person name="Lazarevic D."/>
            <person name="Lipovich L."/>
            <person name="Liu J."/>
            <person name="Liuni S."/>
            <person name="McWilliam S."/>
            <person name="Madan Babu M."/>
            <person name="Madera M."/>
            <person name="Marchionni L."/>
            <person name="Matsuda H."/>
            <person name="Matsuzawa S."/>
            <person name="Miki H."/>
            <person name="Mignone F."/>
            <person name="Miyake S."/>
            <person name="Morris K."/>
            <person name="Mottagui-Tabar S."/>
            <person name="Mulder N."/>
            <person name="Nakano N."/>
            <person name="Nakauchi H."/>
            <person name="Ng P."/>
            <person name="Nilsson R."/>
            <person name="Nishiguchi S."/>
            <person name="Nishikawa S."/>
            <person name="Nori F."/>
            <person name="Ohara O."/>
            <person name="Okazaki Y."/>
            <person name="Orlando V."/>
            <person name="Pang K.C."/>
            <person name="Pavan W.J."/>
            <person name="Pavesi G."/>
            <person name="Pesole G."/>
            <person name="Petrovsky N."/>
            <person name="Piazza S."/>
            <person name="Reed J."/>
            <person name="Reid J.F."/>
            <person name="Ring B.Z."/>
            <person name="Ringwald M."/>
            <person name="Rost B."/>
            <person name="Ruan Y."/>
            <person name="Salzberg S.L."/>
            <person name="Sandelin A."/>
            <person name="Schneider C."/>
            <person name="Schoenbach C."/>
            <person name="Sekiguchi K."/>
            <person name="Semple C.A."/>
            <person name="Seno S."/>
            <person name="Sessa L."/>
            <person name="Sheng Y."/>
            <person name="Shibata Y."/>
            <person name="Shimada H."/>
            <person name="Shimada K."/>
            <person name="Silva D."/>
            <person name="Sinclair B."/>
            <person name="Sperling S."/>
            <person name="Stupka E."/>
            <person name="Sugiura K."/>
            <person name="Sultana R."/>
            <person name="Takenaka Y."/>
            <person name="Taki K."/>
            <person name="Tammoja K."/>
            <person name="Tan S.L."/>
            <person name="Tang S."/>
            <person name="Taylor M.S."/>
            <person name="Tegner J."/>
            <person name="Teichmann S.A."/>
            <person name="Ueda H.R."/>
            <person name="van Nimwegen E."/>
            <person name="Verardo R."/>
            <person name="Wei C.L."/>
            <person name="Yagi K."/>
            <person name="Yamanishi H."/>
            <person name="Zabarovsky E."/>
            <person name="Zhu S."/>
            <person name="Zimmer A."/>
            <person name="Hide W."/>
            <person name="Bult C."/>
            <person name="Grimmond S.M."/>
            <person name="Teasdale R.D."/>
            <person name="Liu E.T."/>
            <person name="Brusic V."/>
            <person name="Quackenbush J."/>
            <person name="Wahlestedt C."/>
            <person name="Mattick J.S."/>
            <person name="Hume D.A."/>
            <person name="Kai C."/>
            <person name="Sasaki D."/>
            <person name="Tomaru Y."/>
            <person name="Fukuda S."/>
            <person name="Kanamori-Katayama M."/>
            <person name="Suzuki M."/>
            <person name="Aoki J."/>
            <person name="Arakawa T."/>
            <person name="Iida J."/>
            <person name="Imamura K."/>
            <person name="Itoh M."/>
            <person name="Kato T."/>
            <person name="Kawaji H."/>
            <person name="Kawagashira N."/>
            <person name="Kawashima T."/>
            <person name="Kojima M."/>
            <person name="Kondo S."/>
            <person name="Konno H."/>
            <person name="Nakano K."/>
            <person name="Ninomiya N."/>
            <person name="Nishio T."/>
            <person name="Okada M."/>
            <person name="Plessy C."/>
            <person name="Shibata K."/>
            <person name="Shiraki T."/>
            <person name="Suzuki S."/>
            <person name="Tagami M."/>
            <person name="Waki K."/>
            <person name="Watahiki A."/>
            <person name="Okamura-Oho Y."/>
            <person name="Suzuki H."/>
            <person name="Kawai J."/>
            <person name="Hayashizaki Y."/>
        </authorList>
    </citation>
    <scope>NUCLEOTIDE SEQUENCE [LARGE SCALE MRNA]</scope>
    <source>
        <strain>C57BL/6J</strain>
        <tissue>Testis</tissue>
    </source>
</reference>
<reference key="2">
    <citation type="journal article" date="2004" name="Genome Res.">
        <title>The status, quality, and expansion of the NIH full-length cDNA project: the Mammalian Gene Collection (MGC).</title>
        <authorList>
            <consortium name="The MGC Project Team"/>
        </authorList>
    </citation>
    <scope>NUCLEOTIDE SEQUENCE [LARGE SCALE MRNA]</scope>
    <source>
        <strain>C57BL/6J</strain>
        <tissue>Brain</tissue>
    </source>
</reference>
<reference key="3">
    <citation type="journal article" date="2008" name="Biochem. J.">
        <title>Mfsd2a encodes a novel major facilitator superfamily domain-containing protein highly induced in brown adipose tissue during fasting and adaptive thermogenesis.</title>
        <authorList>
            <person name="Angers M."/>
            <person name="Uldry M."/>
            <person name="Kong D."/>
            <person name="Gimble J.M."/>
            <person name="Jetten A.M."/>
        </authorList>
    </citation>
    <scope>FUNCTION</scope>
    <scope>INDUCTION</scope>
    <scope>SUBCELLULAR LOCATION</scope>
    <scope>TISSUE SPECIFICITY</scope>
</reference>
<reference key="4">
    <citation type="journal article" date="2012" name="PLoS ONE">
        <title>Major facilitator superfamily domain-containing protein 2a (MFSD2A) has roles in body growth, motor function, and lipid metabolism.</title>
        <authorList>
            <person name="Berger J.H."/>
            <person name="Charron M.J."/>
            <person name="Silver D.L."/>
        </authorList>
    </citation>
    <scope>FUNCTION</scope>
    <scope>SUBCELLULAR LOCATION</scope>
    <scope>TISSUE SPECIFICITY</scope>
    <scope>INDUCTION</scope>
    <scope>GLYCOSYLATION</scope>
    <scope>DISRUPTION PHENOTYPE</scope>
</reference>
<reference key="5">
    <citation type="journal article" date="2014" name="Nature">
        <title>Mfsd2a is a transporter for the essential omega-3 fatty acid docosahexaenoic acid.</title>
        <authorList>
            <person name="Nguyen L.N."/>
            <person name="Ma D."/>
            <person name="Shui G."/>
            <person name="Wong P."/>
            <person name="Cazenave-Gassiot A."/>
            <person name="Zhang X."/>
            <person name="Wenk M.R."/>
            <person name="Goh E.L."/>
            <person name="Silver D.L."/>
        </authorList>
    </citation>
    <scope>FUNCTION</scope>
    <scope>TISSUE SPECIFICITY</scope>
    <scope>DISRUPTION PHENOTYPE</scope>
    <scope>MUTAGENESIS OF ASP-92 AND ASP-96</scope>
</reference>
<reference key="6">
    <citation type="journal article" date="2014" name="Nature">
        <title>Mfsd2a is critical for the formation and function of the blood-brain barrier.</title>
        <authorList>
            <person name="Ben-Zvi A."/>
            <person name="Lacoste B."/>
            <person name="Kur E."/>
            <person name="Andreone B.J."/>
            <person name="Mayshar Y."/>
            <person name="Yan H."/>
            <person name="Gu C."/>
        </authorList>
    </citation>
    <scope>FUNCTION</scope>
    <scope>SUBCELLULAR LOCATION</scope>
    <scope>DISRUPTION PHENOTYPE</scope>
    <scope>TISSUE SPECIFICITY</scope>
</reference>
<reference key="7">
    <citation type="journal article" date="2015" name="Nat. Genet.">
        <title>Inactivating mutations in MFSD2A, required for omega-3 fatty acid transport in brain, cause a lethal microcephaly syndrome.</title>
        <authorList>
            <person name="Guemez-Gamboa A."/>
            <person name="Nguyen L.N."/>
            <person name="Yang H."/>
            <person name="Zaki M.S."/>
            <person name="Kara M."/>
            <person name="Ben-Omran T."/>
            <person name="Akizu N."/>
            <person name="Rosti R.O."/>
            <person name="Rosti B."/>
            <person name="Scott E."/>
            <person name="Schroth J."/>
            <person name="Copeland B."/>
            <person name="Vaux K.K."/>
            <person name="Cazenave-Gassiot A."/>
            <person name="Quek D.Q."/>
            <person name="Wong B.H."/>
            <person name="Tan B.C."/>
            <person name="Wenk M.R."/>
            <person name="Gunel M."/>
            <person name="Gabriel S."/>
            <person name="Chi N.C."/>
            <person name="Silver D.L."/>
            <person name="Gleeson J.G."/>
        </authorList>
    </citation>
    <scope>DISRUPTION PHENOTYPE</scope>
</reference>
<reference key="8">
    <citation type="journal article" date="2021" name="Nature">
        <title>Structure and mechanism of blood-brain-barrier lipid transporter MFSD2A.</title>
        <authorList>
            <person name="Wood C.A.P."/>
            <person name="Zhang J."/>
            <person name="Aydin D."/>
            <person name="Xu Y."/>
            <person name="Andreone B.J."/>
            <person name="Langen U.H."/>
            <person name="Dror R.O."/>
            <person name="Gu C."/>
            <person name="Feng L."/>
        </authorList>
    </citation>
    <scope>STRUCTURE BY ELECTRON MICROSCOPY (3.5 ANGSTROMS) OF 39-511 OF VARIANT HIS-67</scope>
    <scope>FUNCTION</scope>
    <scope>TRANSMEMBRANE DOMAINS</scope>
    <scope>TOPOLOGY</scope>
    <scope>DISULFIDE BOND</scope>
    <scope>MUTAGENESIS OF TYR-55; GLN-56; PHE-64; GLN-67; SER-82; PHE-86; ARG-89; ASP-92; THR-95; ASP-96; GLU-159; THR-163; HIS-166; PRO-168; SER-170; ARG-190; GLU-194; THR-202; GLN-207; CYS-216; ALA-254; PHE-305; SER-309; ARG-330; GLN-334; ASN-335; SER-343; PHE-403; PRO-406; TRP-407; THR-439; LYS-440; THR-451; ASP-455; ARG-461; CYS-464 AND PRO-497</scope>
</reference>